<name>RIR1_SUHVK</name>
<gene>
    <name evidence="1" type="primary">RIR1</name>
    <name type="ordered locus">RR1</name>
    <name type="ordered locus">UL39</name>
</gene>
<organism>
    <name type="scientific">Suid herpesvirus 1 (strain Kaplan)</name>
    <name type="common">SuHV-1</name>
    <name type="synonym">Pseudorabies virus (strain Kaplan)</name>
    <dbReference type="NCBI Taxonomy" id="33703"/>
    <lineage>
        <taxon>Viruses</taxon>
        <taxon>Duplodnaviria</taxon>
        <taxon>Heunggongvirae</taxon>
        <taxon>Peploviricota</taxon>
        <taxon>Herviviricetes</taxon>
        <taxon>Herpesvirales</taxon>
        <taxon>Orthoherpesviridae</taxon>
        <taxon>Alphaherpesvirinae</taxon>
        <taxon>Varicellovirus</taxon>
        <taxon>Varicellovirus suidalpha1</taxon>
        <taxon>Suid herpesvirus 1</taxon>
    </lineage>
</organism>
<evidence type="ECO:0000255" key="1">
    <source>
        <dbReference type="HAMAP-Rule" id="MF_04026"/>
    </source>
</evidence>
<evidence type="ECO:0000256" key="2">
    <source>
        <dbReference type="SAM" id="MobiDB-lite"/>
    </source>
</evidence>
<accession>P50643</accession>
<proteinExistence type="inferred from homology"/>
<protein>
    <recommendedName>
        <fullName evidence="1">Ribonucleoside-diphosphate reductase large subunit</fullName>
        <shortName evidence="1">R1</shortName>
        <ecNumber evidence="1">1.17.4.1</ecNumber>
    </recommendedName>
    <alternativeName>
        <fullName evidence="1">Ribonucleotide reductase large subunit</fullName>
    </alternativeName>
</protein>
<feature type="chain" id="PRO_0000187244" description="Ribonucleoside-diphosphate reductase large subunit">
    <location>
        <begin position="1"/>
        <end position="835"/>
    </location>
</feature>
<feature type="region of interest" description="Disordered" evidence="2">
    <location>
        <begin position="1"/>
        <end position="39"/>
    </location>
</feature>
<feature type="active site" description="Proton acceptor" evidence="1">
    <location>
        <position position="489"/>
    </location>
</feature>
<feature type="active site" description="Cysteine radical intermediate" evidence="1">
    <location>
        <position position="491"/>
    </location>
</feature>
<feature type="active site" description="Proton acceptor" evidence="1">
    <location>
        <position position="493"/>
    </location>
</feature>
<feature type="binding site" evidence="1">
    <location>
        <position position="262"/>
    </location>
    <ligand>
        <name>substrate</name>
    </ligand>
</feature>
<feature type="binding site" evidence="1">
    <location>
        <begin position="277"/>
        <end position="278"/>
    </location>
    <ligand>
        <name>substrate</name>
    </ligand>
</feature>
<feature type="binding site" evidence="1">
    <location>
        <position position="308"/>
    </location>
    <ligand>
        <name>substrate</name>
    </ligand>
</feature>
<feature type="binding site" evidence="1">
    <location>
        <begin position="489"/>
        <end position="493"/>
    </location>
    <ligand>
        <name>substrate</name>
    </ligand>
</feature>
<feature type="binding site" evidence="1">
    <location>
        <begin position="666"/>
        <end position="670"/>
    </location>
    <ligand>
        <name>substrate</name>
    </ligand>
</feature>
<feature type="site" description="Important for hydrogen atom transfer" evidence="1">
    <location>
        <position position="278"/>
    </location>
</feature>
<feature type="site" description="Important for hydrogen atom transfer" evidence="1">
    <location>
        <position position="506"/>
    </location>
</feature>
<feature type="site" description="Important for electron transfer" evidence="1">
    <location>
        <position position="810"/>
    </location>
</feature>
<feature type="site" description="Important for electron transfer" evidence="1">
    <location>
        <position position="811"/>
    </location>
</feature>
<feature type="site" description="Interacts with thioredoxin/glutaredoxin" evidence="1">
    <location>
        <position position="830"/>
    </location>
</feature>
<feature type="site" description="Interacts with thioredoxin/glutaredoxin" evidence="1">
    <location>
        <position position="833"/>
    </location>
</feature>
<feature type="disulfide bond" description="Redox-active" evidence="1">
    <location>
        <begin position="278"/>
        <end position="506"/>
    </location>
</feature>
<organismHost>
    <name type="scientific">Sus scrofa</name>
    <name type="common">Pig</name>
    <dbReference type="NCBI Taxonomy" id="9823"/>
</organismHost>
<reference key="1">
    <citation type="journal article" date="1994" name="Biochim. Biophys. Acta">
        <title>Large and small subunits of the Aujeszky's disease virus ribonucleotide reductase: nucleotide sequence and putative structure.</title>
        <authorList>
            <person name="Kaliman A."/>
            <person name="Boldogkoi Z."/>
            <person name="Fodor I."/>
        </authorList>
    </citation>
    <scope>NUCLEOTIDE SEQUENCE [GENOMIC DNA]</scope>
</reference>
<reference key="2">
    <citation type="journal article" date="2009" name="Trends Biochem. Sci.">
        <title>Tinkering with a viral ribonucleotide reductase.</title>
        <authorList>
            <person name="Lembo D."/>
            <person name="Brune W."/>
        </authorList>
    </citation>
    <scope>REVIEW</scope>
</reference>
<dbReference type="EC" id="1.17.4.1" evidence="1"/>
<dbReference type="EMBL" id="X72087">
    <property type="protein sequence ID" value="CAA50976.1"/>
    <property type="molecule type" value="Genomic_DNA"/>
</dbReference>
<dbReference type="EMBL" id="X80797">
    <property type="protein sequence ID" value="CAA56775.1"/>
    <property type="molecule type" value="Genomic_DNA"/>
</dbReference>
<dbReference type="PIR" id="S47345">
    <property type="entry name" value="S40140"/>
</dbReference>
<dbReference type="SMR" id="P50643"/>
<dbReference type="GO" id="GO:0005524">
    <property type="term" value="F:ATP binding"/>
    <property type="evidence" value="ECO:0007669"/>
    <property type="project" value="UniProtKB-UniRule"/>
</dbReference>
<dbReference type="GO" id="GO:0004748">
    <property type="term" value="F:ribonucleoside-diphosphate reductase activity, thioredoxin disulfide as acceptor"/>
    <property type="evidence" value="ECO:0007669"/>
    <property type="project" value="UniProtKB-UniRule"/>
</dbReference>
<dbReference type="GO" id="GO:0009263">
    <property type="term" value="P:deoxyribonucleotide biosynthetic process"/>
    <property type="evidence" value="ECO:0007669"/>
    <property type="project" value="InterPro"/>
</dbReference>
<dbReference type="GO" id="GO:0006260">
    <property type="term" value="P:DNA replication"/>
    <property type="evidence" value="ECO:0007669"/>
    <property type="project" value="UniProtKB-KW"/>
</dbReference>
<dbReference type="GO" id="GO:0019046">
    <property type="term" value="P:release from viral latency"/>
    <property type="evidence" value="ECO:0007669"/>
    <property type="project" value="UniProtKB-KW"/>
</dbReference>
<dbReference type="Gene3D" id="3.20.70.20">
    <property type="match status" value="1"/>
</dbReference>
<dbReference type="HAMAP" id="MF_04026">
    <property type="entry name" value="HSV_RIR1"/>
    <property type="match status" value="1"/>
</dbReference>
<dbReference type="InterPro" id="IPR034717">
    <property type="entry name" value="HSV_RIR1"/>
</dbReference>
<dbReference type="InterPro" id="IPR013346">
    <property type="entry name" value="NrdE_NrdA_C"/>
</dbReference>
<dbReference type="InterPro" id="IPR000788">
    <property type="entry name" value="RNR_lg_C"/>
</dbReference>
<dbReference type="InterPro" id="IPR013509">
    <property type="entry name" value="RNR_lsu_N"/>
</dbReference>
<dbReference type="InterPro" id="IPR039718">
    <property type="entry name" value="Rrm1"/>
</dbReference>
<dbReference type="NCBIfam" id="TIGR02506">
    <property type="entry name" value="NrdE_NrdA"/>
    <property type="match status" value="1"/>
</dbReference>
<dbReference type="PANTHER" id="PTHR11573">
    <property type="entry name" value="RIBONUCLEOSIDE-DIPHOSPHATE REDUCTASE LARGE CHAIN"/>
    <property type="match status" value="1"/>
</dbReference>
<dbReference type="PANTHER" id="PTHR11573:SF6">
    <property type="entry name" value="RIBONUCLEOSIDE-DIPHOSPHATE REDUCTASE LARGE SUBUNIT"/>
    <property type="match status" value="1"/>
</dbReference>
<dbReference type="Pfam" id="PF02867">
    <property type="entry name" value="Ribonuc_red_lgC"/>
    <property type="match status" value="1"/>
</dbReference>
<dbReference type="Pfam" id="PF00317">
    <property type="entry name" value="Ribonuc_red_lgN"/>
    <property type="match status" value="1"/>
</dbReference>
<dbReference type="PRINTS" id="PR01183">
    <property type="entry name" value="RIBORDTASEM1"/>
</dbReference>
<dbReference type="SUPFAM" id="SSF51998">
    <property type="entry name" value="PFL-like glycyl radical enzymes"/>
    <property type="match status" value="1"/>
</dbReference>
<dbReference type="PROSITE" id="PS00089">
    <property type="entry name" value="RIBORED_LARGE"/>
    <property type="match status" value="1"/>
</dbReference>
<keyword id="KW-0067">ATP-binding</keyword>
<keyword id="KW-1015">Disulfide bond</keyword>
<keyword id="KW-0235">DNA replication</keyword>
<keyword id="KW-0244">Early protein</keyword>
<keyword id="KW-0547">Nucleotide-binding</keyword>
<keyword id="KW-0560">Oxidoreductase</keyword>
<keyword id="KW-1251">Viral latency</keyword>
<keyword id="KW-1272">Viral reactivation from latency</keyword>
<comment type="function">
    <text evidence="1">Ribonucleoside-diphosphate reductase holoenzyme provides the precursors necessary for viral DNA synthesis. Allows virus growth in non-dividing cells, as well as reactivation from latency in infected hosts. Catalyzes the biosynthesis of deoxyribonucleotides from the corresponding ribonucleotides.</text>
</comment>
<comment type="catalytic activity">
    <reaction evidence="1">
        <text>a 2'-deoxyribonucleoside 5'-diphosphate + [thioredoxin]-disulfide + H2O = a ribonucleoside 5'-diphosphate + [thioredoxin]-dithiol</text>
        <dbReference type="Rhea" id="RHEA:23252"/>
        <dbReference type="Rhea" id="RHEA-COMP:10698"/>
        <dbReference type="Rhea" id="RHEA-COMP:10700"/>
        <dbReference type="ChEBI" id="CHEBI:15377"/>
        <dbReference type="ChEBI" id="CHEBI:29950"/>
        <dbReference type="ChEBI" id="CHEBI:50058"/>
        <dbReference type="ChEBI" id="CHEBI:57930"/>
        <dbReference type="ChEBI" id="CHEBI:73316"/>
        <dbReference type="EC" id="1.17.4.1"/>
    </reaction>
</comment>
<comment type="subunit">
    <text evidence="1">Heterotetramer composed of a homodimer of the large subunit (R1) and a homodimer of the small subunit (R2). Larger multisubunit protein complex are also active, composed of (R1)n(R2)n.</text>
</comment>
<comment type="similarity">
    <text evidence="1">Belongs to the ribonucleoside diphosphate reductase large chain family.</text>
</comment>
<sequence>MPPRAPRPAGAVSPPFPPLAGPPLKARAPRARDSPLTSPCRAHAAMASVVAPAASSSAAAPGADAFLDAACPEDVARALAAELEALRALGHDVGAPAPGASRREAALFITRAVDGLKAFSRVDERVYVACGKLVHLRVRSREADLDAWLASPELALIPAVAAAVRRHRARVEAALRWFWREAYPALYARGLQSALKYEEMYLARLEHGRCEAMDQFFVRLAAAAATATRRPMALVLCGSDAWPEVFDAYFRALATQAIVPATPLMLFAGRARGSLASCYLLNPLPRTTEEAVRAITDEVAPILLRRGGVGLSLQSFNRTPSGDCTRGIMAVLKALDSMTAAINSDSERPTGVCVYVEPWHADVRAVLNMRGMLAADESLRCDNIFSCLWTPDLFFQRYQRHLDGERAVKWTLFDDRASHLASLHGPDFAREYERLERLGLGVESLPIQDMAFLIVRSAVMTGSPFLMMKDACNRHFHTDTRGAALATSNLCTEIVQRATPGENGVCNLASVNLPACLAGGAFDFAALRRAARVAAVFVNAMMRIGNYPTGASVEGVRRSRSLGIGLQGLHTTVLALDMDMADPAARRLNAAIAEELLYGVMDASVELCERGLRPFDGFEHSRYARGVMPFDAYERVSLREPMRWDALRVRIAEHGVYNAQFVALMPTVSSSQVTESSEGFSPTFTNMFSKVTISGELLRPNLPLMETLRRLFPRECARRDAVARLERAQWSVAAAFGELPAGHPLAKFKTAFEYDQELLIDMCADRAPFVDHSQSMSLFLTEPADGKLHASRVMGLLMRAYNLGLKTGMYYCKIRKATNNGVFTGGDLVCTSCHL</sequence>